<name>LPXB_SHIFL</name>
<dbReference type="EC" id="2.4.1.182" evidence="1"/>
<dbReference type="EMBL" id="AE005674">
    <property type="protein sequence ID" value="AAN41834.2"/>
    <property type="molecule type" value="Genomic_DNA"/>
</dbReference>
<dbReference type="EMBL" id="AE014073">
    <property type="protein sequence ID" value="AAP15715.1"/>
    <property type="molecule type" value="Genomic_DNA"/>
</dbReference>
<dbReference type="RefSeq" id="NP_706127.2">
    <property type="nucleotide sequence ID" value="NC_004337.2"/>
</dbReference>
<dbReference type="RefSeq" id="WP_000132065.1">
    <property type="nucleotide sequence ID" value="NZ_WPGW01000006.1"/>
</dbReference>
<dbReference type="SMR" id="Q83SL3"/>
<dbReference type="STRING" id="198214.SF0172"/>
<dbReference type="PaxDb" id="198214-SF0172"/>
<dbReference type="GeneID" id="1024463"/>
<dbReference type="KEGG" id="sfl:SF0172"/>
<dbReference type="KEGG" id="sfx:S0175"/>
<dbReference type="PATRIC" id="fig|198214.7.peg.194"/>
<dbReference type="HOGENOM" id="CLU_036577_3_0_6"/>
<dbReference type="UniPathway" id="UPA00359">
    <property type="reaction ID" value="UER00481"/>
</dbReference>
<dbReference type="Proteomes" id="UP000001006">
    <property type="component" value="Chromosome"/>
</dbReference>
<dbReference type="Proteomes" id="UP000002673">
    <property type="component" value="Chromosome"/>
</dbReference>
<dbReference type="GO" id="GO:0016020">
    <property type="term" value="C:membrane"/>
    <property type="evidence" value="ECO:0007669"/>
    <property type="project" value="GOC"/>
</dbReference>
<dbReference type="GO" id="GO:0008915">
    <property type="term" value="F:lipid-A-disaccharide synthase activity"/>
    <property type="evidence" value="ECO:0007669"/>
    <property type="project" value="UniProtKB-UniRule"/>
</dbReference>
<dbReference type="GO" id="GO:0005543">
    <property type="term" value="F:phospholipid binding"/>
    <property type="evidence" value="ECO:0007669"/>
    <property type="project" value="TreeGrafter"/>
</dbReference>
<dbReference type="GO" id="GO:0009245">
    <property type="term" value="P:lipid A biosynthetic process"/>
    <property type="evidence" value="ECO:0007669"/>
    <property type="project" value="UniProtKB-UniRule"/>
</dbReference>
<dbReference type="CDD" id="cd01635">
    <property type="entry name" value="Glycosyltransferase_GTB-type"/>
    <property type="match status" value="1"/>
</dbReference>
<dbReference type="HAMAP" id="MF_00392">
    <property type="entry name" value="LpxB"/>
    <property type="match status" value="1"/>
</dbReference>
<dbReference type="InterPro" id="IPR003835">
    <property type="entry name" value="Glyco_trans_19"/>
</dbReference>
<dbReference type="NCBIfam" id="TIGR00215">
    <property type="entry name" value="lpxB"/>
    <property type="match status" value="1"/>
</dbReference>
<dbReference type="PANTHER" id="PTHR30372">
    <property type="entry name" value="LIPID-A-DISACCHARIDE SYNTHASE"/>
    <property type="match status" value="1"/>
</dbReference>
<dbReference type="PANTHER" id="PTHR30372:SF4">
    <property type="entry name" value="LIPID-A-DISACCHARIDE SYNTHASE, MITOCHONDRIAL-RELATED"/>
    <property type="match status" value="1"/>
</dbReference>
<dbReference type="Pfam" id="PF02684">
    <property type="entry name" value="LpxB"/>
    <property type="match status" value="1"/>
</dbReference>
<dbReference type="SUPFAM" id="SSF53756">
    <property type="entry name" value="UDP-Glycosyltransferase/glycogen phosphorylase"/>
    <property type="match status" value="1"/>
</dbReference>
<protein>
    <recommendedName>
        <fullName evidence="1">Lipid-A-disaccharide synthase</fullName>
        <ecNumber evidence="1">2.4.1.182</ecNumber>
    </recommendedName>
</protein>
<comment type="function">
    <text evidence="1">Condensation of UDP-2,3-diacylglucosamine and 2,3-diacylglucosamine-1-phosphate to form lipid A disaccharide, a precursor of lipid A, a phosphorylated glycolipid that anchors the lipopolysaccharide to the outer membrane of the cell.</text>
</comment>
<comment type="catalytic activity">
    <reaction evidence="1">
        <text>2-N,3-O-bis[(3R)-3-hydroxytetradecanoyl]-alpha-D-glucosaminyl 1-phosphate + UDP-2-N,3-O-bis[(3R)-3-hydroxytetradecanoyl]-alpha-D-glucosamine = lipid A disaccharide (E. coli) + UDP + H(+)</text>
        <dbReference type="Rhea" id="RHEA:22668"/>
        <dbReference type="ChEBI" id="CHEBI:15378"/>
        <dbReference type="ChEBI" id="CHEBI:57957"/>
        <dbReference type="ChEBI" id="CHEBI:58223"/>
        <dbReference type="ChEBI" id="CHEBI:58466"/>
        <dbReference type="ChEBI" id="CHEBI:78847"/>
    </reaction>
</comment>
<comment type="catalytic activity">
    <reaction evidence="1">
        <text>a lipid X + a UDP-2-N,3-O-bis[(3R)-3-hydroxyacyl]-alpha-D-glucosamine = a lipid A disaccharide + UDP + H(+)</text>
        <dbReference type="Rhea" id="RHEA:67828"/>
        <dbReference type="ChEBI" id="CHEBI:15378"/>
        <dbReference type="ChEBI" id="CHEBI:58223"/>
        <dbReference type="ChEBI" id="CHEBI:137748"/>
        <dbReference type="ChEBI" id="CHEBI:176338"/>
        <dbReference type="ChEBI" id="CHEBI:176343"/>
        <dbReference type="EC" id="2.4.1.182"/>
    </reaction>
</comment>
<comment type="pathway">
    <text evidence="1">Glycolipid biosynthesis; lipid IV(A) biosynthesis; lipid IV(A) from (3R)-3-hydroxytetradecanoyl-[acyl-carrier-protein] and UDP-N-acetyl-alpha-D-glucosamine: step 5/6.</text>
</comment>
<comment type="similarity">
    <text evidence="1">Belongs to the LpxB family.</text>
</comment>
<feature type="chain" id="PRO_0000190186" description="Lipid-A-disaccharide synthase">
    <location>
        <begin position="1"/>
        <end position="382"/>
    </location>
</feature>
<keyword id="KW-0328">Glycosyltransferase</keyword>
<keyword id="KW-0441">Lipid A biosynthesis</keyword>
<keyword id="KW-0444">Lipid biosynthesis</keyword>
<keyword id="KW-0443">Lipid metabolism</keyword>
<keyword id="KW-1185">Reference proteome</keyword>
<keyword id="KW-0808">Transferase</keyword>
<gene>
    <name evidence="1" type="primary">lpxB</name>
    <name type="ordered locus">SF0172</name>
    <name type="ordered locus">S0175</name>
</gene>
<reference key="1">
    <citation type="journal article" date="2002" name="Nucleic Acids Res.">
        <title>Genome sequence of Shigella flexneri 2a: insights into pathogenicity through comparison with genomes of Escherichia coli K12 and O157.</title>
        <authorList>
            <person name="Jin Q."/>
            <person name="Yuan Z."/>
            <person name="Xu J."/>
            <person name="Wang Y."/>
            <person name="Shen Y."/>
            <person name="Lu W."/>
            <person name="Wang J."/>
            <person name="Liu H."/>
            <person name="Yang J."/>
            <person name="Yang F."/>
            <person name="Zhang X."/>
            <person name="Zhang J."/>
            <person name="Yang G."/>
            <person name="Wu H."/>
            <person name="Qu D."/>
            <person name="Dong J."/>
            <person name="Sun L."/>
            <person name="Xue Y."/>
            <person name="Zhao A."/>
            <person name="Gao Y."/>
            <person name="Zhu J."/>
            <person name="Kan B."/>
            <person name="Ding K."/>
            <person name="Chen S."/>
            <person name="Cheng H."/>
            <person name="Yao Z."/>
            <person name="He B."/>
            <person name="Chen R."/>
            <person name="Ma D."/>
            <person name="Qiang B."/>
            <person name="Wen Y."/>
            <person name="Hou Y."/>
            <person name="Yu J."/>
        </authorList>
    </citation>
    <scope>NUCLEOTIDE SEQUENCE [LARGE SCALE GENOMIC DNA]</scope>
    <source>
        <strain>301 / Serotype 2a</strain>
    </source>
</reference>
<reference key="2">
    <citation type="journal article" date="2003" name="Infect. Immun.">
        <title>Complete genome sequence and comparative genomics of Shigella flexneri serotype 2a strain 2457T.</title>
        <authorList>
            <person name="Wei J."/>
            <person name="Goldberg M.B."/>
            <person name="Burland V."/>
            <person name="Venkatesan M.M."/>
            <person name="Deng W."/>
            <person name="Fournier G."/>
            <person name="Mayhew G.F."/>
            <person name="Plunkett G. III"/>
            <person name="Rose D.J."/>
            <person name="Darling A."/>
            <person name="Mau B."/>
            <person name="Perna N.T."/>
            <person name="Payne S.M."/>
            <person name="Runyen-Janecky L.J."/>
            <person name="Zhou S."/>
            <person name="Schwartz D.C."/>
            <person name="Blattner F.R."/>
        </authorList>
    </citation>
    <scope>NUCLEOTIDE SEQUENCE [LARGE SCALE GENOMIC DNA]</scope>
    <source>
        <strain>ATCC 700930 / 2457T / Serotype 2a</strain>
    </source>
</reference>
<accession>Q83SL3</accession>
<accession>Q7UDQ7</accession>
<proteinExistence type="inferred from homology"/>
<organism>
    <name type="scientific">Shigella flexneri</name>
    <dbReference type="NCBI Taxonomy" id="623"/>
    <lineage>
        <taxon>Bacteria</taxon>
        <taxon>Pseudomonadati</taxon>
        <taxon>Pseudomonadota</taxon>
        <taxon>Gammaproteobacteria</taxon>
        <taxon>Enterobacterales</taxon>
        <taxon>Enterobacteriaceae</taxon>
        <taxon>Shigella</taxon>
    </lineage>
</organism>
<evidence type="ECO:0000255" key="1">
    <source>
        <dbReference type="HAMAP-Rule" id="MF_00392"/>
    </source>
</evidence>
<sequence length="382" mass="42399">MTDQRPLTIALVAGETSGDILGAGLIRALKERVPNARFVGVAGPRMQAEGCEAWYEMEELAVMGIVEVLGRLRRLLHIRADLTKRFGELKPDVFVGIDAPDFNITLEGNLKKQGIKTIHYVSPSVWAWRQKRVFKIGRATDLVLAFLPFEKAFYDKYNVPCRFIGHTMADAMPLDPDKNGARDVLGIPYDAHCLALLPGSRGAEVEMLSADFLKTAQLLRQTYPDLEIVVPLVNAKRREQFERIKAEVAPDLSVHLLDGMGREAMVASDAALLASGTAALECMLAKCPMVVGYRMKPFTFWLAKRLVKTDYVSLPNLLAGRELVKELLQEECEPQKLAAALLPLLANGKTSHAMHDTFRELHQQIRCNADEQAAQAVLELAQ</sequence>